<evidence type="ECO:0000255" key="1">
    <source>
        <dbReference type="HAMAP-Rule" id="MF_01589"/>
    </source>
</evidence>
<proteinExistence type="inferred from homology"/>
<gene>
    <name evidence="1" type="primary">cmoA</name>
    <name type="ordered locus">ECUMN_2168</name>
</gene>
<protein>
    <recommendedName>
        <fullName evidence="1">Carboxy-S-adenosyl-L-methionine synthase</fullName>
        <shortName evidence="1">Cx-SAM synthase</shortName>
        <ecNumber evidence="1">2.1.3.-</ecNumber>
    </recommendedName>
</protein>
<feature type="chain" id="PRO_1000201350" description="Carboxy-S-adenosyl-L-methionine synthase">
    <location>
        <begin position="1"/>
        <end position="247"/>
    </location>
</feature>
<feature type="binding site" evidence="1">
    <location>
        <position position="39"/>
    </location>
    <ligand>
        <name>S-adenosyl-L-methionine</name>
        <dbReference type="ChEBI" id="CHEBI:59789"/>
    </ligand>
</feature>
<feature type="binding site" evidence="1">
    <location>
        <begin position="64"/>
        <end position="66"/>
    </location>
    <ligand>
        <name>S-adenosyl-L-methionine</name>
        <dbReference type="ChEBI" id="CHEBI:59789"/>
    </ligand>
</feature>
<feature type="binding site" evidence="1">
    <location>
        <begin position="89"/>
        <end position="90"/>
    </location>
    <ligand>
        <name>S-adenosyl-L-methionine</name>
        <dbReference type="ChEBI" id="CHEBI:59789"/>
    </ligand>
</feature>
<feature type="binding site" evidence="1">
    <location>
        <begin position="117"/>
        <end position="118"/>
    </location>
    <ligand>
        <name>S-adenosyl-L-methionine</name>
        <dbReference type="ChEBI" id="CHEBI:59789"/>
    </ligand>
</feature>
<feature type="binding site" evidence="1">
    <location>
        <position position="132"/>
    </location>
    <ligand>
        <name>S-adenosyl-L-methionine</name>
        <dbReference type="ChEBI" id="CHEBI:59789"/>
    </ligand>
</feature>
<feature type="binding site" evidence="1">
    <location>
        <position position="199"/>
    </location>
    <ligand>
        <name>S-adenosyl-L-methionine</name>
        <dbReference type="ChEBI" id="CHEBI:59789"/>
    </ligand>
</feature>
<comment type="function">
    <text evidence="1">Catalyzes the conversion of S-adenosyl-L-methionine (SAM) to carboxy-S-adenosyl-L-methionine (Cx-SAM).</text>
</comment>
<comment type="catalytic activity">
    <reaction evidence="1">
        <text>prephenate + S-adenosyl-L-methionine = carboxy-S-adenosyl-L-methionine + 3-phenylpyruvate + H2O</text>
        <dbReference type="Rhea" id="RHEA:51692"/>
        <dbReference type="ChEBI" id="CHEBI:15377"/>
        <dbReference type="ChEBI" id="CHEBI:18005"/>
        <dbReference type="ChEBI" id="CHEBI:29934"/>
        <dbReference type="ChEBI" id="CHEBI:59789"/>
        <dbReference type="ChEBI" id="CHEBI:134278"/>
    </reaction>
</comment>
<comment type="subunit">
    <text evidence="1">Homodimer.</text>
</comment>
<comment type="similarity">
    <text evidence="1">Belongs to the class I-like SAM-binding methyltransferase superfamily. Cx-SAM synthase family.</text>
</comment>
<organism>
    <name type="scientific">Escherichia coli O17:K52:H18 (strain UMN026 / ExPEC)</name>
    <dbReference type="NCBI Taxonomy" id="585056"/>
    <lineage>
        <taxon>Bacteria</taxon>
        <taxon>Pseudomonadati</taxon>
        <taxon>Pseudomonadota</taxon>
        <taxon>Gammaproteobacteria</taxon>
        <taxon>Enterobacterales</taxon>
        <taxon>Enterobacteriaceae</taxon>
        <taxon>Escherichia</taxon>
    </lineage>
</organism>
<keyword id="KW-0949">S-adenosyl-L-methionine</keyword>
<keyword id="KW-0808">Transferase</keyword>
<accession>B7NBM1</accession>
<sequence length="247" mass="27790">MSHRDTLFSAPIARLGDWTFDERVAEVFPDMIQRSVPGYSNIISMIGMLAERFVQPGTQVYDLGCSLGAATLSVRRNIHHDNCKIIAIDNSPAMIERCRRHIDAYKAPTPVDVIEGDIRNIAIENASMVVLNFTLQFLEPSERQALLDKIYQGLNPGGALVLSEKFSFEDAKVGELLFNMHHDFKRANGYSELEISQKRSMLENVMLTDSVETHKARLHQAGFEHSELWFQCFNFGSLVALKAEDAA</sequence>
<dbReference type="EC" id="2.1.3.-" evidence="1"/>
<dbReference type="EMBL" id="CU928163">
    <property type="protein sequence ID" value="CAR13361.1"/>
    <property type="molecule type" value="Genomic_DNA"/>
</dbReference>
<dbReference type="RefSeq" id="WP_000019598.1">
    <property type="nucleotide sequence ID" value="NC_011751.1"/>
</dbReference>
<dbReference type="RefSeq" id="YP_002412890.1">
    <property type="nucleotide sequence ID" value="NC_011751.1"/>
</dbReference>
<dbReference type="SMR" id="B7NBM1"/>
<dbReference type="STRING" id="585056.ECUMN_2168"/>
<dbReference type="KEGG" id="eum:ECUMN_2168"/>
<dbReference type="PATRIC" id="fig|585056.7.peg.2353"/>
<dbReference type="HOGENOM" id="CLU_078475_0_0_6"/>
<dbReference type="Proteomes" id="UP000007097">
    <property type="component" value="Chromosome"/>
</dbReference>
<dbReference type="GO" id="GO:0016743">
    <property type="term" value="F:carboxyl- or carbamoyltransferase activity"/>
    <property type="evidence" value="ECO:0007669"/>
    <property type="project" value="UniProtKB-UniRule"/>
</dbReference>
<dbReference type="GO" id="GO:1904047">
    <property type="term" value="F:S-adenosyl-L-methionine binding"/>
    <property type="evidence" value="ECO:0007669"/>
    <property type="project" value="UniProtKB-UniRule"/>
</dbReference>
<dbReference type="GO" id="GO:0002098">
    <property type="term" value="P:tRNA wobble uridine modification"/>
    <property type="evidence" value="ECO:0007669"/>
    <property type="project" value="InterPro"/>
</dbReference>
<dbReference type="CDD" id="cd02440">
    <property type="entry name" value="AdoMet_MTases"/>
    <property type="match status" value="1"/>
</dbReference>
<dbReference type="FunFam" id="3.40.50.150:FF:000030">
    <property type="entry name" value="Carboxy-S-adenosyl-L-methionine synthase"/>
    <property type="match status" value="1"/>
</dbReference>
<dbReference type="Gene3D" id="3.40.50.150">
    <property type="entry name" value="Vaccinia Virus protein VP39"/>
    <property type="match status" value="1"/>
</dbReference>
<dbReference type="HAMAP" id="MF_01589">
    <property type="entry name" value="Cx_SAM_synthase"/>
    <property type="match status" value="1"/>
</dbReference>
<dbReference type="InterPro" id="IPR005271">
    <property type="entry name" value="CmoA"/>
</dbReference>
<dbReference type="InterPro" id="IPR041698">
    <property type="entry name" value="Methyltransf_25"/>
</dbReference>
<dbReference type="InterPro" id="IPR029063">
    <property type="entry name" value="SAM-dependent_MTases_sf"/>
</dbReference>
<dbReference type="NCBIfam" id="TIGR00740">
    <property type="entry name" value="carboxy-S-adenosyl-L-methionine synthase CmoA"/>
    <property type="match status" value="1"/>
</dbReference>
<dbReference type="NCBIfam" id="NF011995">
    <property type="entry name" value="PRK15451.1"/>
    <property type="match status" value="1"/>
</dbReference>
<dbReference type="PANTHER" id="PTHR43861:SF2">
    <property type="entry name" value="CARBOXY-S-ADENOSYL-L-METHIONINE SYNTHASE"/>
    <property type="match status" value="1"/>
</dbReference>
<dbReference type="PANTHER" id="PTHR43861">
    <property type="entry name" value="TRANS-ACONITATE 2-METHYLTRANSFERASE-RELATED"/>
    <property type="match status" value="1"/>
</dbReference>
<dbReference type="Pfam" id="PF13649">
    <property type="entry name" value="Methyltransf_25"/>
    <property type="match status" value="1"/>
</dbReference>
<dbReference type="PIRSF" id="PIRSF006325">
    <property type="entry name" value="MeTrfase_bac"/>
    <property type="match status" value="1"/>
</dbReference>
<dbReference type="SUPFAM" id="SSF53335">
    <property type="entry name" value="S-adenosyl-L-methionine-dependent methyltransferases"/>
    <property type="match status" value="1"/>
</dbReference>
<name>CMOA_ECOLU</name>
<reference key="1">
    <citation type="journal article" date="2009" name="PLoS Genet.">
        <title>Organised genome dynamics in the Escherichia coli species results in highly diverse adaptive paths.</title>
        <authorList>
            <person name="Touchon M."/>
            <person name="Hoede C."/>
            <person name="Tenaillon O."/>
            <person name="Barbe V."/>
            <person name="Baeriswyl S."/>
            <person name="Bidet P."/>
            <person name="Bingen E."/>
            <person name="Bonacorsi S."/>
            <person name="Bouchier C."/>
            <person name="Bouvet O."/>
            <person name="Calteau A."/>
            <person name="Chiapello H."/>
            <person name="Clermont O."/>
            <person name="Cruveiller S."/>
            <person name="Danchin A."/>
            <person name="Diard M."/>
            <person name="Dossat C."/>
            <person name="Karoui M.E."/>
            <person name="Frapy E."/>
            <person name="Garry L."/>
            <person name="Ghigo J.M."/>
            <person name="Gilles A.M."/>
            <person name="Johnson J."/>
            <person name="Le Bouguenec C."/>
            <person name="Lescat M."/>
            <person name="Mangenot S."/>
            <person name="Martinez-Jehanne V."/>
            <person name="Matic I."/>
            <person name="Nassif X."/>
            <person name="Oztas S."/>
            <person name="Petit M.A."/>
            <person name="Pichon C."/>
            <person name="Rouy Z."/>
            <person name="Ruf C.S."/>
            <person name="Schneider D."/>
            <person name="Tourret J."/>
            <person name="Vacherie B."/>
            <person name="Vallenet D."/>
            <person name="Medigue C."/>
            <person name="Rocha E.P.C."/>
            <person name="Denamur E."/>
        </authorList>
    </citation>
    <scope>NUCLEOTIDE SEQUENCE [LARGE SCALE GENOMIC DNA]</scope>
    <source>
        <strain>UMN026 / ExPEC</strain>
    </source>
</reference>